<reference key="1">
    <citation type="journal article" date="2007" name="Biochemistry (Mosc.)">
        <title>Purification and primary structure of novel lipid transfer proteins from germinated lentil (Lens culinaris) seeds.</title>
        <authorList>
            <person name="Finkina E.I."/>
            <person name="Balandin S.V."/>
            <person name="Serebryakova M.V."/>
            <person name="Potapenko N.A."/>
            <person name="Tagaev A.A."/>
            <person name="Ovchinnikova T.V."/>
        </authorList>
    </citation>
    <scope>NUCLEOTIDE SEQUENCE [MRNA]</scope>
    <source>
        <tissue>Seedling</tissue>
    </source>
</reference>
<evidence type="ECO:0000250" key="1">
    <source>
        <dbReference type="UniProtKB" id="P23096"/>
    </source>
</evidence>
<evidence type="ECO:0000255" key="2"/>
<accession>A0AT28</accession>
<organism>
    <name type="scientific">Lens culinaris</name>
    <name type="common">Lentil</name>
    <name type="synonym">Cicer lens</name>
    <dbReference type="NCBI Taxonomy" id="3864"/>
    <lineage>
        <taxon>Eukaryota</taxon>
        <taxon>Viridiplantae</taxon>
        <taxon>Streptophyta</taxon>
        <taxon>Embryophyta</taxon>
        <taxon>Tracheophyta</taxon>
        <taxon>Spermatophyta</taxon>
        <taxon>Magnoliopsida</taxon>
        <taxon>eudicotyledons</taxon>
        <taxon>Gunneridae</taxon>
        <taxon>Pentapetalae</taxon>
        <taxon>rosids</taxon>
        <taxon>fabids</taxon>
        <taxon>Fabales</taxon>
        <taxon>Fabaceae</taxon>
        <taxon>Papilionoideae</taxon>
        <taxon>50 kb inversion clade</taxon>
        <taxon>NPAAA clade</taxon>
        <taxon>Hologalegina</taxon>
        <taxon>IRL clade</taxon>
        <taxon>Fabeae</taxon>
        <taxon>Lens</taxon>
    </lineage>
</organism>
<protein>
    <recommendedName>
        <fullName>Non-specific lipid-transfer protein 1</fullName>
        <shortName>LTP1</shortName>
    </recommendedName>
</protein>
<proteinExistence type="inferred from homology"/>
<comment type="function">
    <text>Plant non-specific lipid-transfer proteins transfer phospholipids as well as galactolipids across membranes. May play a role in wax or cutin deposition in the cell walls of expanding epidermal cells and certain secretory tissues.</text>
</comment>
<comment type="similarity">
    <text evidence="2">Belongs to the plant LTP family.</text>
</comment>
<dbReference type="EMBL" id="AY793553">
    <property type="protein sequence ID" value="AAX35806.1"/>
    <property type="molecule type" value="mRNA"/>
</dbReference>
<dbReference type="SMR" id="A0AT28"/>
<dbReference type="Allergome" id="8712">
    <property type="allergen name" value="Len c 3"/>
</dbReference>
<dbReference type="GO" id="GO:0008289">
    <property type="term" value="F:lipid binding"/>
    <property type="evidence" value="ECO:0007669"/>
    <property type="project" value="UniProtKB-KW"/>
</dbReference>
<dbReference type="GO" id="GO:0006869">
    <property type="term" value="P:lipid transport"/>
    <property type="evidence" value="ECO:0007669"/>
    <property type="project" value="InterPro"/>
</dbReference>
<dbReference type="CDD" id="cd01960">
    <property type="entry name" value="nsLTP1"/>
    <property type="match status" value="1"/>
</dbReference>
<dbReference type="FunFam" id="1.10.110.10:FF:000002">
    <property type="entry name" value="Non-specific lipid-transfer protein"/>
    <property type="match status" value="1"/>
</dbReference>
<dbReference type="Gene3D" id="1.10.110.10">
    <property type="entry name" value="Plant lipid-transfer and hydrophobic proteins"/>
    <property type="match status" value="1"/>
</dbReference>
<dbReference type="InterPro" id="IPR036312">
    <property type="entry name" value="Bifun_inhib/LTP/seed_sf"/>
</dbReference>
<dbReference type="InterPro" id="IPR016140">
    <property type="entry name" value="Bifunc_inhib/LTP/seed_store"/>
</dbReference>
<dbReference type="InterPro" id="IPR000528">
    <property type="entry name" value="Plant_nsLTP"/>
</dbReference>
<dbReference type="PANTHER" id="PTHR33076">
    <property type="entry name" value="NON-SPECIFIC LIPID-TRANSFER PROTEIN 2-RELATED"/>
    <property type="match status" value="1"/>
</dbReference>
<dbReference type="Pfam" id="PF00234">
    <property type="entry name" value="Tryp_alpha_amyl"/>
    <property type="match status" value="1"/>
</dbReference>
<dbReference type="PRINTS" id="PR00382">
    <property type="entry name" value="LIPIDTRNSFER"/>
</dbReference>
<dbReference type="SMART" id="SM00499">
    <property type="entry name" value="AAI"/>
    <property type="match status" value="1"/>
</dbReference>
<dbReference type="SUPFAM" id="SSF47699">
    <property type="entry name" value="Bifunctional inhibitor/lipid-transfer protein/seed storage 2S albumin"/>
    <property type="match status" value="1"/>
</dbReference>
<dbReference type="PROSITE" id="PS00597">
    <property type="entry name" value="PLANT_LTP"/>
    <property type="match status" value="1"/>
</dbReference>
<name>NLTP1_LENCU</name>
<feature type="signal peptide" evidence="2">
    <location>
        <begin position="1"/>
        <end position="25"/>
    </location>
</feature>
<feature type="chain" id="PRO_5000147973" description="Non-specific lipid-transfer protein 1">
    <location>
        <begin position="26"/>
        <end position="118"/>
    </location>
</feature>
<feature type="disulfide bond" evidence="1">
    <location>
        <begin position="29"/>
        <end position="76"/>
    </location>
</feature>
<feature type="disulfide bond" evidence="1">
    <location>
        <begin position="39"/>
        <end position="53"/>
    </location>
</feature>
<feature type="disulfide bond" evidence="1">
    <location>
        <begin position="54"/>
        <end position="99"/>
    </location>
</feature>
<feature type="disulfide bond" evidence="1">
    <location>
        <begin position="74"/>
        <end position="113"/>
    </location>
</feature>
<keyword id="KW-1015">Disulfide bond</keyword>
<keyword id="KW-0446">Lipid-binding</keyword>
<keyword id="KW-0732">Signal</keyword>
<keyword id="KW-0813">Transport</keyword>
<sequence length="118" mass="11938">MASLRVSCLVALMCMVVISAPMAEAAISCGTVSGALVPCLTYLKGGPGPSPQCCGGVKRLNGAARTTIDRRAACNCLKSSAGSISGLKPGNVATLPGKCGVRLPYTISTSTNCNTIRF</sequence>